<dbReference type="EMBL" id="AJ225896">
    <property type="protein sequence ID" value="CAB38102.1"/>
    <property type="status" value="ALT_FRAME"/>
    <property type="molecule type" value="Genomic_DNA"/>
</dbReference>
<dbReference type="EMBL" id="AE006469">
    <property type="protein sequence ID" value="AAK65521.1"/>
    <property type="molecule type" value="Genomic_DNA"/>
</dbReference>
<dbReference type="PIR" id="G95369">
    <property type="entry name" value="G95369"/>
</dbReference>
<dbReference type="RefSeq" id="NP_436109.1">
    <property type="nucleotide sequence ID" value="NC_003037.1"/>
</dbReference>
<dbReference type="RefSeq" id="WP_010967829.1">
    <property type="nucleotide sequence ID" value="NC_003037.1"/>
</dbReference>
<dbReference type="SMR" id="Q9Z3Q1"/>
<dbReference type="EnsemblBacteria" id="AAK65521">
    <property type="protein sequence ID" value="AAK65521"/>
    <property type="gene ID" value="SMa1586"/>
</dbReference>
<dbReference type="KEGG" id="sme:SMa1586"/>
<dbReference type="HOGENOM" id="CLU_106261_2_0_5"/>
<dbReference type="OrthoDB" id="8453701at2"/>
<dbReference type="Proteomes" id="UP000001976">
    <property type="component" value="Plasmid pSymA"/>
</dbReference>
<dbReference type="GO" id="GO:0003677">
    <property type="term" value="F:DNA binding"/>
    <property type="evidence" value="ECO:0007669"/>
    <property type="project" value="InterPro"/>
</dbReference>
<dbReference type="GO" id="GO:0004803">
    <property type="term" value="F:transposase activity"/>
    <property type="evidence" value="ECO:0007669"/>
    <property type="project" value="InterPro"/>
</dbReference>
<dbReference type="GO" id="GO:0006313">
    <property type="term" value="P:DNA transposition"/>
    <property type="evidence" value="ECO:0007669"/>
    <property type="project" value="InterPro"/>
</dbReference>
<dbReference type="InterPro" id="IPR009057">
    <property type="entry name" value="Homeodomain-like_sf"/>
</dbReference>
<dbReference type="InterPro" id="IPR002514">
    <property type="entry name" value="Transposase_8"/>
</dbReference>
<dbReference type="Pfam" id="PF01527">
    <property type="entry name" value="HTH_Tnp_1"/>
    <property type="match status" value="1"/>
</dbReference>
<dbReference type="SUPFAM" id="SSF46689">
    <property type="entry name" value="Homeodomain-like"/>
    <property type="match status" value="1"/>
</dbReference>
<evidence type="ECO:0000256" key="1">
    <source>
        <dbReference type="SAM" id="MobiDB-lite"/>
    </source>
</evidence>
<evidence type="ECO:0000305" key="2"/>
<protein>
    <recommendedName>
        <fullName>Probable transcriptional regulator syrB2</fullName>
    </recommendedName>
</protein>
<sequence length="151" mass="17029">MADESNTGSIAAAVAPNADVKAPAAKKKRSPRRQKAVAEPRRAVSETPAAKPRRYSEQQRKEKLKLIETQVTEGKVTLKDAIKSAGISEQTYYQWKRTVKPVEQKAEKRLPTGEELADLVRLEEENQRLRKLLAEKLRAENADLRKRLGLD</sequence>
<geneLocation type="plasmid">
    <name>pSymA</name>
    <name>megaplasmid 1</name>
</geneLocation>
<feature type="chain" id="PRO_0000072393" description="Probable transcriptional regulator syrB2">
    <location>
        <begin position="1"/>
        <end position="151"/>
    </location>
</feature>
<feature type="region of interest" description="Disordered" evidence="1">
    <location>
        <begin position="1"/>
        <end position="61"/>
    </location>
</feature>
<feature type="compositionally biased region" description="Low complexity" evidence="1">
    <location>
        <begin position="11"/>
        <end position="23"/>
    </location>
</feature>
<feature type="compositionally biased region" description="Basic residues" evidence="1">
    <location>
        <begin position="24"/>
        <end position="35"/>
    </location>
</feature>
<feature type="sequence conflict" description="In Ref. 1; CAB38102." evidence="2" ref="1">
    <original>N</original>
    <variation>H</variation>
    <location>
        <position position="17"/>
    </location>
</feature>
<gene>
    <name type="primary">syrB2</name>
    <name type="ordered locus">RA0863</name>
    <name type="ORF">SMa1586</name>
</gene>
<organism>
    <name type="scientific">Rhizobium meliloti (strain 1021)</name>
    <name type="common">Ensifer meliloti</name>
    <name type="synonym">Sinorhizobium meliloti</name>
    <dbReference type="NCBI Taxonomy" id="266834"/>
    <lineage>
        <taxon>Bacteria</taxon>
        <taxon>Pseudomonadati</taxon>
        <taxon>Pseudomonadota</taxon>
        <taxon>Alphaproteobacteria</taxon>
        <taxon>Hyphomicrobiales</taxon>
        <taxon>Rhizobiaceae</taxon>
        <taxon>Sinorhizobium/Ensifer group</taxon>
        <taxon>Sinorhizobium</taxon>
    </lineage>
</organism>
<comment type="function">
    <text>Seems to affect the transcription of cya3. May be negatively autoregulated.</text>
</comment>
<comment type="similarity">
    <text evidence="2">Belongs to the SyrB family.</text>
</comment>
<comment type="sequence caution" evidence="2">
    <conflict type="frameshift">
        <sequence resource="EMBL-CDS" id="CAB38102"/>
    </conflict>
</comment>
<proteinExistence type="inferred from homology"/>
<name>SYRB2_RHIME</name>
<keyword id="KW-0536">Nodulation</keyword>
<keyword id="KW-0614">Plasmid</keyword>
<keyword id="KW-1185">Reference proteome</keyword>
<keyword id="KW-0678">Repressor</keyword>
<keyword id="KW-0804">Transcription</keyword>
<keyword id="KW-0805">Transcription regulation</keyword>
<accession>Q9Z3Q1</accession>
<reference key="1">
    <citation type="journal article" date="1999" name="Mol. Gen. Genet.">
        <title>The eff-482 locus of Sinorhizobium meliloti CXM1-105 that influences symbiotic effectiveness consists of three genes encoding an endoglycanase, a transcriptional regulator and an adenylate cyclase.</title>
        <authorList>
            <person name="Sharypova L.A."/>
            <person name="Yurgel S.N."/>
            <person name="Keller M."/>
            <person name="Simarov B.V."/>
            <person name="Puehler A."/>
            <person name="Becker A."/>
        </authorList>
    </citation>
    <scope>NUCLEOTIDE SEQUENCE [GENOMIC DNA]</scope>
    <source>
        <strain>CXM1-105</strain>
    </source>
</reference>
<reference key="2">
    <citation type="journal article" date="2001" name="Proc. Natl. Acad. Sci. U.S.A.">
        <title>Nucleotide sequence and predicted functions of the entire Sinorhizobium meliloti pSymA megaplasmid.</title>
        <authorList>
            <person name="Barnett M.J."/>
            <person name="Fisher R.F."/>
            <person name="Jones T."/>
            <person name="Komp C."/>
            <person name="Abola A.P."/>
            <person name="Barloy-Hubler F."/>
            <person name="Bowser L."/>
            <person name="Capela D."/>
            <person name="Galibert F."/>
            <person name="Gouzy J."/>
            <person name="Gurjal M."/>
            <person name="Hong A."/>
            <person name="Huizar L."/>
            <person name="Hyman R.W."/>
            <person name="Kahn D."/>
            <person name="Kahn M.L."/>
            <person name="Kalman S."/>
            <person name="Keating D.H."/>
            <person name="Palm C."/>
            <person name="Peck M.C."/>
            <person name="Surzycki R."/>
            <person name="Wells D.H."/>
            <person name="Yeh K.-C."/>
            <person name="Davis R.W."/>
            <person name="Federspiel N.A."/>
            <person name="Long S.R."/>
        </authorList>
    </citation>
    <scope>NUCLEOTIDE SEQUENCE [LARGE SCALE GENOMIC DNA]</scope>
    <source>
        <strain>1021</strain>
    </source>
</reference>
<reference key="3">
    <citation type="journal article" date="2001" name="Science">
        <title>The composite genome of the legume symbiont Sinorhizobium meliloti.</title>
        <authorList>
            <person name="Galibert F."/>
            <person name="Finan T.M."/>
            <person name="Long S.R."/>
            <person name="Puehler A."/>
            <person name="Abola P."/>
            <person name="Ampe F."/>
            <person name="Barloy-Hubler F."/>
            <person name="Barnett M.J."/>
            <person name="Becker A."/>
            <person name="Boistard P."/>
            <person name="Bothe G."/>
            <person name="Boutry M."/>
            <person name="Bowser L."/>
            <person name="Buhrmester J."/>
            <person name="Cadieu E."/>
            <person name="Capela D."/>
            <person name="Chain P."/>
            <person name="Cowie A."/>
            <person name="Davis R.W."/>
            <person name="Dreano S."/>
            <person name="Federspiel N.A."/>
            <person name="Fisher R.F."/>
            <person name="Gloux S."/>
            <person name="Godrie T."/>
            <person name="Goffeau A."/>
            <person name="Golding B."/>
            <person name="Gouzy J."/>
            <person name="Gurjal M."/>
            <person name="Hernandez-Lucas I."/>
            <person name="Hong A."/>
            <person name="Huizar L."/>
            <person name="Hyman R.W."/>
            <person name="Jones T."/>
            <person name="Kahn D."/>
            <person name="Kahn M.L."/>
            <person name="Kalman S."/>
            <person name="Keating D.H."/>
            <person name="Kiss E."/>
            <person name="Komp C."/>
            <person name="Lelaure V."/>
            <person name="Masuy D."/>
            <person name="Palm C."/>
            <person name="Peck M.C."/>
            <person name="Pohl T.M."/>
            <person name="Portetelle D."/>
            <person name="Purnelle B."/>
            <person name="Ramsperger U."/>
            <person name="Surzycki R."/>
            <person name="Thebault P."/>
            <person name="Vandenbol M."/>
            <person name="Vorhoelter F.J."/>
            <person name="Weidner S."/>
            <person name="Wells D.H."/>
            <person name="Wong K."/>
            <person name="Yeh K.-C."/>
            <person name="Batut J."/>
        </authorList>
    </citation>
    <scope>NUCLEOTIDE SEQUENCE [LARGE SCALE GENOMIC DNA]</scope>
    <source>
        <strain>1021</strain>
    </source>
</reference>